<accession>Q5U239</accession>
<keyword id="KW-0325">Glycoprotein</keyword>
<keyword id="KW-0472">Membrane</keyword>
<keyword id="KW-1185">Reference proteome</keyword>
<keyword id="KW-0812">Transmembrane</keyword>
<keyword id="KW-1133">Transmembrane helix</keyword>
<gene>
    <name type="primary">tmem145</name>
</gene>
<evidence type="ECO:0000255" key="1"/>
<evidence type="ECO:0000305" key="2"/>
<feature type="chain" id="PRO_0000280357" description="Transmembrane protein 145">
    <location>
        <begin position="1"/>
        <end position="547"/>
    </location>
</feature>
<feature type="transmembrane region" description="Helical" evidence="1">
    <location>
        <begin position="2"/>
        <end position="22"/>
    </location>
</feature>
<feature type="transmembrane region" description="Helical" evidence="1">
    <location>
        <begin position="182"/>
        <end position="202"/>
    </location>
</feature>
<feature type="transmembrane region" description="Helical" evidence="1">
    <location>
        <begin position="214"/>
        <end position="234"/>
    </location>
</feature>
<feature type="transmembrane region" description="Helical" evidence="1">
    <location>
        <begin position="248"/>
        <end position="268"/>
    </location>
</feature>
<feature type="transmembrane region" description="Helical" evidence="1">
    <location>
        <begin position="283"/>
        <end position="303"/>
    </location>
</feature>
<feature type="transmembrane region" description="Helical" evidence="1">
    <location>
        <begin position="325"/>
        <end position="345"/>
    </location>
</feature>
<feature type="transmembrane region" description="Helical" evidence="1">
    <location>
        <begin position="356"/>
        <end position="376"/>
    </location>
</feature>
<feature type="transmembrane region" description="Helical" evidence="1">
    <location>
        <begin position="388"/>
        <end position="408"/>
    </location>
</feature>
<feature type="glycosylation site" description="N-linked (GlcNAc...) asparagine" evidence="1">
    <location>
        <position position="28"/>
    </location>
</feature>
<feature type="glycosylation site" description="N-linked (GlcNAc...) asparagine" evidence="1">
    <location>
        <position position="102"/>
    </location>
</feature>
<feature type="glycosylation site" description="N-linked (GlcNAc...) asparagine" evidence="1">
    <location>
        <position position="243"/>
    </location>
</feature>
<feature type="glycosylation site" description="N-linked (GlcNAc...) asparagine" evidence="1">
    <location>
        <position position="443"/>
    </location>
</feature>
<feature type="glycosylation site" description="N-linked (GlcNAc...) asparagine" evidence="1">
    <location>
        <position position="453"/>
    </location>
</feature>
<feature type="glycosylation site" description="N-linked (GlcNAc...) asparagine" evidence="1">
    <location>
        <position position="464"/>
    </location>
</feature>
<proteinExistence type="evidence at transcript level"/>
<organism>
    <name type="scientific">Xenopus laevis</name>
    <name type="common">African clawed frog</name>
    <dbReference type="NCBI Taxonomy" id="8355"/>
    <lineage>
        <taxon>Eukaryota</taxon>
        <taxon>Metazoa</taxon>
        <taxon>Chordata</taxon>
        <taxon>Craniata</taxon>
        <taxon>Vertebrata</taxon>
        <taxon>Euteleostomi</taxon>
        <taxon>Amphibia</taxon>
        <taxon>Batrachia</taxon>
        <taxon>Anura</taxon>
        <taxon>Pipoidea</taxon>
        <taxon>Pipidae</taxon>
        <taxon>Xenopodinae</taxon>
        <taxon>Xenopus</taxon>
        <taxon>Xenopus</taxon>
    </lineage>
</organism>
<dbReference type="EMBL" id="BC086291">
    <property type="protein sequence ID" value="AAH86291.1"/>
    <property type="molecule type" value="mRNA"/>
</dbReference>
<dbReference type="RefSeq" id="NP_001088644.1">
    <property type="nucleotide sequence ID" value="NM_001095175.1"/>
</dbReference>
<dbReference type="GlyCosmos" id="Q5U239">
    <property type="glycosylation" value="6 sites, No reported glycans"/>
</dbReference>
<dbReference type="DNASU" id="495696"/>
<dbReference type="GeneID" id="495696"/>
<dbReference type="KEGG" id="xla:495696"/>
<dbReference type="AGR" id="Xenbase:XB-GENE-977885"/>
<dbReference type="CTD" id="495696"/>
<dbReference type="Xenbase" id="XB-GENE-977885">
    <property type="gene designation" value="tmem145.L"/>
</dbReference>
<dbReference type="OMA" id="YTWSGCA"/>
<dbReference type="OrthoDB" id="205745at2759"/>
<dbReference type="Proteomes" id="UP000186698">
    <property type="component" value="Chromosome 7L"/>
</dbReference>
<dbReference type="Bgee" id="495696">
    <property type="expression patterns" value="Expressed in brain and 16 other cell types or tissues"/>
</dbReference>
<dbReference type="GO" id="GO:0016020">
    <property type="term" value="C:membrane"/>
    <property type="evidence" value="ECO:0007669"/>
    <property type="project" value="UniProtKB-SubCell"/>
</dbReference>
<dbReference type="GO" id="GO:0007186">
    <property type="term" value="P:G protein-coupled receptor signaling pathway"/>
    <property type="evidence" value="ECO:0007669"/>
    <property type="project" value="InterPro"/>
</dbReference>
<dbReference type="GO" id="GO:0019236">
    <property type="term" value="P:response to pheromone"/>
    <property type="evidence" value="ECO:0007669"/>
    <property type="project" value="InterPro"/>
</dbReference>
<dbReference type="InterPro" id="IPR053880">
    <property type="entry name" value="GPR180-like_N"/>
</dbReference>
<dbReference type="InterPro" id="IPR047831">
    <property type="entry name" value="GPR180/TMEM145"/>
</dbReference>
<dbReference type="InterPro" id="IPR019336">
    <property type="entry name" value="GPR180/TMEM145_TM"/>
</dbReference>
<dbReference type="PANTHER" id="PTHR23252">
    <property type="entry name" value="INTIMAL THICKNESS RECEPTOR-RELATED"/>
    <property type="match status" value="1"/>
</dbReference>
<dbReference type="PANTHER" id="PTHR23252:SF24">
    <property type="entry name" value="TRANSMEMBRANE PROTEIN 145"/>
    <property type="match status" value="1"/>
</dbReference>
<dbReference type="Pfam" id="PF10192">
    <property type="entry name" value="GPR180-TMEM145_TM"/>
    <property type="match status" value="1"/>
</dbReference>
<dbReference type="Pfam" id="PF21892">
    <property type="entry name" value="TMEM145_N"/>
    <property type="match status" value="1"/>
</dbReference>
<sequence length="547" mass="61754">MGPHAGPGMLLLLLGFLRISAAKYVRGNLTTKEDWVFLTRFCFLSDYGRLEFKFKYPEAKCCQNILLYFDDTSQWPAVYKKDNKDCLMKESVIRPENNQVINLTTQYVWSGCQVIKEAGQSYLSCNSGRSFRSVRERWWYIALSKCGGDGLQLEYEMTLTNGKSFWTRHFSADEFGILETDITFLLIFILILLLSCYFGYILRGRQLLHTTYKMFMAAAGVEVLSLLLFCVYWGQYAQDGVGNSSIKVLAKLLFSASFLIFLLMLILLGKGFTVTRGRISHLGSIKLSVYMTLYTVTHTVLFIHEAQFFDPAQVLYTYESPAGYGNIALQFLAYIWFCYAVLVTLKHFPEKQAFYVPFFAAYTLWFFAVPVMALIANFGIPKWAREKIVNGIQLGIHLYAHAVFLIITRPSAANKNFPYHVRTSQIGIMEQSTEKFPHHVYGNVTFISDSVPNVTELFSIPSSNGSSAGITKPVPYPVTLGQCYSQLTSDSHQVISPPLLNGVPGVQKVPVGETQLGGLQQLHAPQIHHQNGFPEYFSIRSAGPQPM</sequence>
<comment type="subcellular location">
    <subcellularLocation>
        <location evidence="2">Membrane</location>
        <topology evidence="2">Multi-pass membrane protein</topology>
    </subcellularLocation>
</comment>
<protein>
    <recommendedName>
        <fullName>Transmembrane protein 145</fullName>
    </recommendedName>
</protein>
<reference key="1">
    <citation type="submission" date="2004-11" db="EMBL/GenBank/DDBJ databases">
        <authorList>
            <consortium name="NIH - Xenopus Gene Collection (XGC) project"/>
        </authorList>
    </citation>
    <scope>NUCLEOTIDE SEQUENCE [LARGE SCALE MRNA]</scope>
    <source>
        <tissue>Eye</tissue>
    </source>
</reference>
<name>TM145_XENLA</name>